<name>AROB_BURVG</name>
<accession>A4JAT5</accession>
<keyword id="KW-0028">Amino-acid biosynthesis</keyword>
<keyword id="KW-0057">Aromatic amino acid biosynthesis</keyword>
<keyword id="KW-0170">Cobalt</keyword>
<keyword id="KW-0963">Cytoplasm</keyword>
<keyword id="KW-0456">Lyase</keyword>
<keyword id="KW-0479">Metal-binding</keyword>
<keyword id="KW-0520">NAD</keyword>
<keyword id="KW-0547">Nucleotide-binding</keyword>
<keyword id="KW-0862">Zinc</keyword>
<sequence>MITVNVDLGDRAYPIHIGAGLIGRTELFAPHINGSSVTIVTNTTVDPLYGDALRAALAPLGKRVSTVVLPDGEAYKNWETLNLIFDGLLTERADRKTTLIALGGGVIGDMTGFAAACYMRGVPFIQVPTTLLSQVDSSVGGKTGINHPLGKNMIGAFYQPQAVVADIGALATLPDRELAAGIAEVIKTGAIADAEFFDWIEANVDALNRREPAVLVHAVKRSCEIKASVVAADEREGGLRAILNFGHTFGHAIEAGLGYGEWLHGEAVGCGMVMAGDLSVRLGLLDEASRQRLDAVIAAARLPVSGPALGEARYMDLMRVDKKAEAGAIKFILLKRFGDTLIAPAPDEAVFATLAKTTR</sequence>
<evidence type="ECO:0000255" key="1">
    <source>
        <dbReference type="HAMAP-Rule" id="MF_00110"/>
    </source>
</evidence>
<dbReference type="EC" id="4.2.3.4" evidence="1"/>
<dbReference type="EMBL" id="CP000614">
    <property type="protein sequence ID" value="ABO53388.1"/>
    <property type="molecule type" value="Genomic_DNA"/>
</dbReference>
<dbReference type="SMR" id="A4JAT5"/>
<dbReference type="KEGG" id="bvi:Bcep1808_0375"/>
<dbReference type="eggNOG" id="COG0337">
    <property type="taxonomic scope" value="Bacteria"/>
</dbReference>
<dbReference type="HOGENOM" id="CLU_001201_0_2_4"/>
<dbReference type="UniPathway" id="UPA00053">
    <property type="reaction ID" value="UER00085"/>
</dbReference>
<dbReference type="Proteomes" id="UP000002287">
    <property type="component" value="Chromosome 1"/>
</dbReference>
<dbReference type="GO" id="GO:0005737">
    <property type="term" value="C:cytoplasm"/>
    <property type="evidence" value="ECO:0007669"/>
    <property type="project" value="UniProtKB-SubCell"/>
</dbReference>
<dbReference type="GO" id="GO:0003856">
    <property type="term" value="F:3-dehydroquinate synthase activity"/>
    <property type="evidence" value="ECO:0007669"/>
    <property type="project" value="UniProtKB-UniRule"/>
</dbReference>
<dbReference type="GO" id="GO:0046872">
    <property type="term" value="F:metal ion binding"/>
    <property type="evidence" value="ECO:0007669"/>
    <property type="project" value="UniProtKB-KW"/>
</dbReference>
<dbReference type="GO" id="GO:0000166">
    <property type="term" value="F:nucleotide binding"/>
    <property type="evidence" value="ECO:0007669"/>
    <property type="project" value="UniProtKB-KW"/>
</dbReference>
<dbReference type="GO" id="GO:0008652">
    <property type="term" value="P:amino acid biosynthetic process"/>
    <property type="evidence" value="ECO:0007669"/>
    <property type="project" value="UniProtKB-KW"/>
</dbReference>
<dbReference type="GO" id="GO:0009073">
    <property type="term" value="P:aromatic amino acid family biosynthetic process"/>
    <property type="evidence" value="ECO:0007669"/>
    <property type="project" value="UniProtKB-KW"/>
</dbReference>
<dbReference type="GO" id="GO:0009423">
    <property type="term" value="P:chorismate biosynthetic process"/>
    <property type="evidence" value="ECO:0007669"/>
    <property type="project" value="UniProtKB-UniRule"/>
</dbReference>
<dbReference type="CDD" id="cd08195">
    <property type="entry name" value="DHQS"/>
    <property type="match status" value="1"/>
</dbReference>
<dbReference type="FunFam" id="3.40.50.1970:FF:000001">
    <property type="entry name" value="3-dehydroquinate synthase"/>
    <property type="match status" value="1"/>
</dbReference>
<dbReference type="Gene3D" id="3.40.50.1970">
    <property type="match status" value="1"/>
</dbReference>
<dbReference type="Gene3D" id="1.20.1090.10">
    <property type="entry name" value="Dehydroquinate synthase-like - alpha domain"/>
    <property type="match status" value="1"/>
</dbReference>
<dbReference type="HAMAP" id="MF_00110">
    <property type="entry name" value="DHQ_synthase"/>
    <property type="match status" value="1"/>
</dbReference>
<dbReference type="InterPro" id="IPR050071">
    <property type="entry name" value="Dehydroquinate_synthase"/>
</dbReference>
<dbReference type="InterPro" id="IPR016037">
    <property type="entry name" value="DHQ_synth_AroB"/>
</dbReference>
<dbReference type="InterPro" id="IPR030963">
    <property type="entry name" value="DHQ_synth_fam"/>
</dbReference>
<dbReference type="InterPro" id="IPR030960">
    <property type="entry name" value="DHQS/DOIS_N"/>
</dbReference>
<dbReference type="InterPro" id="IPR056179">
    <property type="entry name" value="DHQS_C"/>
</dbReference>
<dbReference type="NCBIfam" id="TIGR01357">
    <property type="entry name" value="aroB"/>
    <property type="match status" value="1"/>
</dbReference>
<dbReference type="PANTHER" id="PTHR43622">
    <property type="entry name" value="3-DEHYDROQUINATE SYNTHASE"/>
    <property type="match status" value="1"/>
</dbReference>
<dbReference type="PANTHER" id="PTHR43622:SF7">
    <property type="entry name" value="3-DEHYDROQUINATE SYNTHASE, CHLOROPLASTIC"/>
    <property type="match status" value="1"/>
</dbReference>
<dbReference type="Pfam" id="PF01761">
    <property type="entry name" value="DHQ_synthase"/>
    <property type="match status" value="1"/>
</dbReference>
<dbReference type="Pfam" id="PF24621">
    <property type="entry name" value="DHQS_C"/>
    <property type="match status" value="1"/>
</dbReference>
<dbReference type="PIRSF" id="PIRSF001455">
    <property type="entry name" value="DHQ_synth"/>
    <property type="match status" value="1"/>
</dbReference>
<dbReference type="SUPFAM" id="SSF56796">
    <property type="entry name" value="Dehydroquinate synthase-like"/>
    <property type="match status" value="1"/>
</dbReference>
<gene>
    <name evidence="1" type="primary">aroB</name>
    <name type="ordered locus">Bcep1808_0375</name>
</gene>
<proteinExistence type="inferred from homology"/>
<comment type="function">
    <text evidence="1">Catalyzes the conversion of 3-deoxy-D-arabino-heptulosonate 7-phosphate (DAHP) to dehydroquinate (DHQ).</text>
</comment>
<comment type="catalytic activity">
    <reaction evidence="1">
        <text>7-phospho-2-dehydro-3-deoxy-D-arabino-heptonate = 3-dehydroquinate + phosphate</text>
        <dbReference type="Rhea" id="RHEA:21968"/>
        <dbReference type="ChEBI" id="CHEBI:32364"/>
        <dbReference type="ChEBI" id="CHEBI:43474"/>
        <dbReference type="ChEBI" id="CHEBI:58394"/>
        <dbReference type="EC" id="4.2.3.4"/>
    </reaction>
</comment>
<comment type="cofactor">
    <cofactor evidence="1">
        <name>Co(2+)</name>
        <dbReference type="ChEBI" id="CHEBI:48828"/>
    </cofactor>
    <cofactor evidence="1">
        <name>Zn(2+)</name>
        <dbReference type="ChEBI" id="CHEBI:29105"/>
    </cofactor>
    <text evidence="1">Binds 1 divalent metal cation per subunit. Can use either Co(2+) or Zn(2+).</text>
</comment>
<comment type="cofactor">
    <cofactor evidence="1">
        <name>NAD(+)</name>
        <dbReference type="ChEBI" id="CHEBI:57540"/>
    </cofactor>
</comment>
<comment type="pathway">
    <text evidence="1">Metabolic intermediate biosynthesis; chorismate biosynthesis; chorismate from D-erythrose 4-phosphate and phosphoenolpyruvate: step 2/7.</text>
</comment>
<comment type="subcellular location">
    <subcellularLocation>
        <location evidence="1">Cytoplasm</location>
    </subcellularLocation>
</comment>
<comment type="similarity">
    <text evidence="1">Belongs to the sugar phosphate cyclases superfamily. Dehydroquinate synthase family.</text>
</comment>
<feature type="chain" id="PRO_1000094480" description="3-dehydroquinate synthase">
    <location>
        <begin position="1"/>
        <end position="359"/>
    </location>
</feature>
<feature type="binding site" evidence="1">
    <location>
        <begin position="71"/>
        <end position="76"/>
    </location>
    <ligand>
        <name>NAD(+)</name>
        <dbReference type="ChEBI" id="CHEBI:57540"/>
    </ligand>
</feature>
<feature type="binding site" evidence="1">
    <location>
        <begin position="105"/>
        <end position="109"/>
    </location>
    <ligand>
        <name>NAD(+)</name>
        <dbReference type="ChEBI" id="CHEBI:57540"/>
    </ligand>
</feature>
<feature type="binding site" evidence="1">
    <location>
        <begin position="129"/>
        <end position="130"/>
    </location>
    <ligand>
        <name>NAD(+)</name>
        <dbReference type="ChEBI" id="CHEBI:57540"/>
    </ligand>
</feature>
<feature type="binding site" evidence="1">
    <location>
        <position position="142"/>
    </location>
    <ligand>
        <name>NAD(+)</name>
        <dbReference type="ChEBI" id="CHEBI:57540"/>
    </ligand>
</feature>
<feature type="binding site" evidence="1">
    <location>
        <position position="151"/>
    </location>
    <ligand>
        <name>NAD(+)</name>
        <dbReference type="ChEBI" id="CHEBI:57540"/>
    </ligand>
</feature>
<feature type="binding site" evidence="1">
    <location>
        <position position="184"/>
    </location>
    <ligand>
        <name>Zn(2+)</name>
        <dbReference type="ChEBI" id="CHEBI:29105"/>
    </ligand>
</feature>
<feature type="binding site" evidence="1">
    <location>
        <position position="247"/>
    </location>
    <ligand>
        <name>Zn(2+)</name>
        <dbReference type="ChEBI" id="CHEBI:29105"/>
    </ligand>
</feature>
<feature type="binding site" evidence="1">
    <location>
        <position position="264"/>
    </location>
    <ligand>
        <name>Zn(2+)</name>
        <dbReference type="ChEBI" id="CHEBI:29105"/>
    </ligand>
</feature>
<organism>
    <name type="scientific">Burkholderia vietnamiensis (strain G4 / LMG 22486)</name>
    <name type="common">Burkholderia cepacia (strain R1808)</name>
    <dbReference type="NCBI Taxonomy" id="269482"/>
    <lineage>
        <taxon>Bacteria</taxon>
        <taxon>Pseudomonadati</taxon>
        <taxon>Pseudomonadota</taxon>
        <taxon>Betaproteobacteria</taxon>
        <taxon>Burkholderiales</taxon>
        <taxon>Burkholderiaceae</taxon>
        <taxon>Burkholderia</taxon>
        <taxon>Burkholderia cepacia complex</taxon>
    </lineage>
</organism>
<reference key="1">
    <citation type="submission" date="2007-03" db="EMBL/GenBank/DDBJ databases">
        <title>Complete sequence of chromosome 1 of Burkholderia vietnamiensis G4.</title>
        <authorList>
            <consortium name="US DOE Joint Genome Institute"/>
            <person name="Copeland A."/>
            <person name="Lucas S."/>
            <person name="Lapidus A."/>
            <person name="Barry K."/>
            <person name="Detter J.C."/>
            <person name="Glavina del Rio T."/>
            <person name="Hammon N."/>
            <person name="Israni S."/>
            <person name="Dalin E."/>
            <person name="Tice H."/>
            <person name="Pitluck S."/>
            <person name="Chain P."/>
            <person name="Malfatti S."/>
            <person name="Shin M."/>
            <person name="Vergez L."/>
            <person name="Schmutz J."/>
            <person name="Larimer F."/>
            <person name="Land M."/>
            <person name="Hauser L."/>
            <person name="Kyrpides N."/>
            <person name="Tiedje J."/>
            <person name="Richardson P."/>
        </authorList>
    </citation>
    <scope>NUCLEOTIDE SEQUENCE [LARGE SCALE GENOMIC DNA]</scope>
    <source>
        <strain>G4 / LMG 22486</strain>
    </source>
</reference>
<protein>
    <recommendedName>
        <fullName evidence="1">3-dehydroquinate synthase</fullName>
        <shortName evidence="1">DHQS</shortName>
        <ecNumber evidence="1">4.2.3.4</ecNumber>
    </recommendedName>
</protein>